<evidence type="ECO:0000255" key="1">
    <source>
        <dbReference type="HAMAP-Rule" id="MF_00365"/>
    </source>
</evidence>
<organism>
    <name type="scientific">Listeria welshimeri serovar 6b (strain ATCC 35897 / DSM 20650 / CCUG 15529 / CIP 8149 / NCTC 11857 / SLCC 5334 / V8)</name>
    <dbReference type="NCBI Taxonomy" id="386043"/>
    <lineage>
        <taxon>Bacteria</taxon>
        <taxon>Bacillati</taxon>
        <taxon>Bacillota</taxon>
        <taxon>Bacilli</taxon>
        <taxon>Bacillales</taxon>
        <taxon>Listeriaceae</taxon>
        <taxon>Listeria</taxon>
    </lineage>
</organism>
<sequence>MHLESIVLRNFRNYENLELEFSPSVNVFLGENAQGKTNLLEAVLMLALAKSHRTTNDKDFIMWEKEEAKMEGRVVKRGQTVPLELAITQKGKRAKVNHLEQKKLSQYVGNLNVVIFAPEDLSLVKGAPGIRRRFLNMEIGQMQPIYLHNLSEYQRILQQRNQYLKMLQMKRKVDPMLLDILTEQFADVAINLTKRRADFIQKLEAYAAPIHHQISRGLETLKIEYKASVTLNGDDPDTWKADLLQKMESIKQREIDRGVTLVGPHRDDSLFYINGQNVQDFGSQGQQRTTALSVKLAEIDLIHEETGEYPVLLLDDVLSELDDYRQSHLLGAIEGKVQTFVTTTSTSGIDHDTLKQATTFYVEKGTVKKS</sequence>
<protein>
    <recommendedName>
        <fullName evidence="1">DNA replication and repair protein RecF</fullName>
    </recommendedName>
</protein>
<dbReference type="EMBL" id="AM263198">
    <property type="protein sequence ID" value="CAK19423.1"/>
    <property type="molecule type" value="Genomic_DNA"/>
</dbReference>
<dbReference type="RefSeq" id="WP_011700885.1">
    <property type="nucleotide sequence ID" value="NC_008555.1"/>
</dbReference>
<dbReference type="SMR" id="A0AEJ1"/>
<dbReference type="STRING" id="386043.lwe0005"/>
<dbReference type="GeneID" id="61187889"/>
<dbReference type="KEGG" id="lwe:lwe0005"/>
<dbReference type="eggNOG" id="COG1195">
    <property type="taxonomic scope" value="Bacteria"/>
</dbReference>
<dbReference type="HOGENOM" id="CLU_040267_0_1_9"/>
<dbReference type="OrthoDB" id="9803889at2"/>
<dbReference type="Proteomes" id="UP000000779">
    <property type="component" value="Chromosome"/>
</dbReference>
<dbReference type="GO" id="GO:0005737">
    <property type="term" value="C:cytoplasm"/>
    <property type="evidence" value="ECO:0007669"/>
    <property type="project" value="UniProtKB-SubCell"/>
</dbReference>
<dbReference type="GO" id="GO:0005524">
    <property type="term" value="F:ATP binding"/>
    <property type="evidence" value="ECO:0007669"/>
    <property type="project" value="UniProtKB-UniRule"/>
</dbReference>
<dbReference type="GO" id="GO:0003697">
    <property type="term" value="F:single-stranded DNA binding"/>
    <property type="evidence" value="ECO:0007669"/>
    <property type="project" value="UniProtKB-UniRule"/>
</dbReference>
<dbReference type="GO" id="GO:0006260">
    <property type="term" value="P:DNA replication"/>
    <property type="evidence" value="ECO:0007669"/>
    <property type="project" value="UniProtKB-UniRule"/>
</dbReference>
<dbReference type="GO" id="GO:0000731">
    <property type="term" value="P:DNA synthesis involved in DNA repair"/>
    <property type="evidence" value="ECO:0007669"/>
    <property type="project" value="TreeGrafter"/>
</dbReference>
<dbReference type="GO" id="GO:0006302">
    <property type="term" value="P:double-strand break repair"/>
    <property type="evidence" value="ECO:0007669"/>
    <property type="project" value="TreeGrafter"/>
</dbReference>
<dbReference type="GO" id="GO:0009432">
    <property type="term" value="P:SOS response"/>
    <property type="evidence" value="ECO:0007669"/>
    <property type="project" value="UniProtKB-UniRule"/>
</dbReference>
<dbReference type="CDD" id="cd03242">
    <property type="entry name" value="ABC_RecF"/>
    <property type="match status" value="1"/>
</dbReference>
<dbReference type="FunFam" id="1.20.1050.90:FF:000002">
    <property type="entry name" value="DNA replication and repair protein RecF"/>
    <property type="match status" value="1"/>
</dbReference>
<dbReference type="Gene3D" id="3.40.50.300">
    <property type="entry name" value="P-loop containing nucleotide triphosphate hydrolases"/>
    <property type="match status" value="1"/>
</dbReference>
<dbReference type="Gene3D" id="1.20.1050.90">
    <property type="entry name" value="RecF/RecN/SMC, N-terminal domain"/>
    <property type="match status" value="1"/>
</dbReference>
<dbReference type="HAMAP" id="MF_00365">
    <property type="entry name" value="RecF"/>
    <property type="match status" value="1"/>
</dbReference>
<dbReference type="InterPro" id="IPR001238">
    <property type="entry name" value="DNA-binding_RecF"/>
</dbReference>
<dbReference type="InterPro" id="IPR018078">
    <property type="entry name" value="DNA-binding_RecF_CS"/>
</dbReference>
<dbReference type="InterPro" id="IPR027417">
    <property type="entry name" value="P-loop_NTPase"/>
</dbReference>
<dbReference type="InterPro" id="IPR003395">
    <property type="entry name" value="RecF/RecN/SMC_N"/>
</dbReference>
<dbReference type="InterPro" id="IPR042174">
    <property type="entry name" value="RecF_2"/>
</dbReference>
<dbReference type="NCBIfam" id="TIGR00611">
    <property type="entry name" value="recf"/>
    <property type="match status" value="1"/>
</dbReference>
<dbReference type="PANTHER" id="PTHR32182">
    <property type="entry name" value="DNA REPLICATION AND REPAIR PROTEIN RECF"/>
    <property type="match status" value="1"/>
</dbReference>
<dbReference type="PANTHER" id="PTHR32182:SF0">
    <property type="entry name" value="DNA REPLICATION AND REPAIR PROTEIN RECF"/>
    <property type="match status" value="1"/>
</dbReference>
<dbReference type="Pfam" id="PF02463">
    <property type="entry name" value="SMC_N"/>
    <property type="match status" value="1"/>
</dbReference>
<dbReference type="SUPFAM" id="SSF52540">
    <property type="entry name" value="P-loop containing nucleoside triphosphate hydrolases"/>
    <property type="match status" value="1"/>
</dbReference>
<dbReference type="PROSITE" id="PS00617">
    <property type="entry name" value="RECF_1"/>
    <property type="match status" value="1"/>
</dbReference>
<dbReference type="PROSITE" id="PS00618">
    <property type="entry name" value="RECF_2"/>
    <property type="match status" value="1"/>
</dbReference>
<accession>A0AEJ1</accession>
<gene>
    <name evidence="1" type="primary">recF</name>
    <name type="ordered locus">lwe0005</name>
</gene>
<reference key="1">
    <citation type="journal article" date="2006" name="J. Bacteriol.">
        <title>Whole-genome sequence of Listeria welshimeri reveals common steps in genome reduction with Listeria innocua as compared to Listeria monocytogenes.</title>
        <authorList>
            <person name="Hain T."/>
            <person name="Steinweg C."/>
            <person name="Kuenne C.T."/>
            <person name="Billion A."/>
            <person name="Ghai R."/>
            <person name="Chatterjee S.S."/>
            <person name="Domann E."/>
            <person name="Kaerst U."/>
            <person name="Goesmann A."/>
            <person name="Bekel T."/>
            <person name="Bartels D."/>
            <person name="Kaiser O."/>
            <person name="Meyer F."/>
            <person name="Puehler A."/>
            <person name="Weisshaar B."/>
            <person name="Wehland J."/>
            <person name="Liang C."/>
            <person name="Dandekar T."/>
            <person name="Lampidis R."/>
            <person name="Kreft J."/>
            <person name="Goebel W."/>
            <person name="Chakraborty T."/>
        </authorList>
    </citation>
    <scope>NUCLEOTIDE SEQUENCE [LARGE SCALE GENOMIC DNA]</scope>
    <source>
        <strain>ATCC 35897 / DSM 20650 / CCUG 15529 / CIP 8149 / NCTC 11857 / SLCC 5334 / V8</strain>
    </source>
</reference>
<keyword id="KW-0067">ATP-binding</keyword>
<keyword id="KW-0963">Cytoplasm</keyword>
<keyword id="KW-0227">DNA damage</keyword>
<keyword id="KW-0234">DNA repair</keyword>
<keyword id="KW-0235">DNA replication</keyword>
<keyword id="KW-0238">DNA-binding</keyword>
<keyword id="KW-0547">Nucleotide-binding</keyword>
<keyword id="KW-0742">SOS response</keyword>
<feature type="chain" id="PRO_1000048540" description="DNA replication and repair protein RecF">
    <location>
        <begin position="1"/>
        <end position="370"/>
    </location>
</feature>
<feature type="binding site" evidence="1">
    <location>
        <begin position="30"/>
        <end position="37"/>
    </location>
    <ligand>
        <name>ATP</name>
        <dbReference type="ChEBI" id="CHEBI:30616"/>
    </ligand>
</feature>
<comment type="function">
    <text evidence="1">The RecF protein is involved in DNA metabolism; it is required for DNA replication and normal SOS inducibility. RecF binds preferentially to single-stranded, linear DNA. It also seems to bind ATP.</text>
</comment>
<comment type="subcellular location">
    <subcellularLocation>
        <location evidence="1">Cytoplasm</location>
    </subcellularLocation>
</comment>
<comment type="similarity">
    <text evidence="1">Belongs to the RecF family.</text>
</comment>
<proteinExistence type="inferred from homology"/>
<name>RECF_LISW6</name>